<dbReference type="EC" id="3.4.24.-"/>
<dbReference type="EMBL" id="CH445325">
    <property type="protein sequence ID" value="EAT91988.1"/>
    <property type="molecule type" value="Genomic_DNA"/>
</dbReference>
<dbReference type="RefSeq" id="XP_001791178.1">
    <property type="nucleotide sequence ID" value="XM_001791126.1"/>
</dbReference>
<dbReference type="SMR" id="Q0V671"/>
<dbReference type="MEROPS" id="M36.001"/>
<dbReference type="GlyCosmos" id="Q0V671">
    <property type="glycosylation" value="4 sites, No reported glycans"/>
</dbReference>
<dbReference type="EnsemblFungi" id="SNOT_00493">
    <property type="protein sequence ID" value="SNOT_00493"/>
    <property type="gene ID" value="SNOG_00493"/>
</dbReference>
<dbReference type="GeneID" id="5968027"/>
<dbReference type="KEGG" id="pno:SNOG_00493"/>
<dbReference type="VEuPathDB" id="FungiDB:JI435_004930"/>
<dbReference type="eggNOG" id="ENOG502QTDC">
    <property type="taxonomic scope" value="Eukaryota"/>
</dbReference>
<dbReference type="HOGENOM" id="CLU_012703_3_0_1"/>
<dbReference type="InParanoid" id="Q0V671"/>
<dbReference type="OMA" id="YIWTRAN"/>
<dbReference type="OrthoDB" id="3227768at2759"/>
<dbReference type="Proteomes" id="UP000001055">
    <property type="component" value="Unassembled WGS sequence"/>
</dbReference>
<dbReference type="GO" id="GO:0005576">
    <property type="term" value="C:extracellular region"/>
    <property type="evidence" value="ECO:0007669"/>
    <property type="project" value="UniProtKB-SubCell"/>
</dbReference>
<dbReference type="GO" id="GO:0004222">
    <property type="term" value="F:metalloendopeptidase activity"/>
    <property type="evidence" value="ECO:0007669"/>
    <property type="project" value="InterPro"/>
</dbReference>
<dbReference type="GO" id="GO:0008270">
    <property type="term" value="F:zinc ion binding"/>
    <property type="evidence" value="ECO:0007669"/>
    <property type="project" value="InterPro"/>
</dbReference>
<dbReference type="GO" id="GO:0006508">
    <property type="term" value="P:proteolysis"/>
    <property type="evidence" value="ECO:0007669"/>
    <property type="project" value="UniProtKB-KW"/>
</dbReference>
<dbReference type="CDD" id="cd09596">
    <property type="entry name" value="M36"/>
    <property type="match status" value="1"/>
</dbReference>
<dbReference type="Gene3D" id="3.10.170.10">
    <property type="match status" value="1"/>
</dbReference>
<dbReference type="Gene3D" id="1.10.390.10">
    <property type="entry name" value="Neutral Protease Domain 2"/>
    <property type="match status" value="1"/>
</dbReference>
<dbReference type="InterPro" id="IPR011096">
    <property type="entry name" value="FTP_domain"/>
</dbReference>
<dbReference type="InterPro" id="IPR050371">
    <property type="entry name" value="Fungal_virulence_M36"/>
</dbReference>
<dbReference type="InterPro" id="IPR001842">
    <property type="entry name" value="Peptidase_M36"/>
</dbReference>
<dbReference type="InterPro" id="IPR027268">
    <property type="entry name" value="Peptidase_M4/M1_CTD_sf"/>
</dbReference>
<dbReference type="PANTHER" id="PTHR33478">
    <property type="entry name" value="EXTRACELLULAR METALLOPROTEINASE MEP"/>
    <property type="match status" value="1"/>
</dbReference>
<dbReference type="PANTHER" id="PTHR33478:SF1">
    <property type="entry name" value="EXTRACELLULAR METALLOPROTEINASE MEP"/>
    <property type="match status" value="1"/>
</dbReference>
<dbReference type="Pfam" id="PF07504">
    <property type="entry name" value="FTP"/>
    <property type="match status" value="1"/>
</dbReference>
<dbReference type="Pfam" id="PF02128">
    <property type="entry name" value="Peptidase_M36"/>
    <property type="match status" value="1"/>
</dbReference>
<dbReference type="PRINTS" id="PR00999">
    <property type="entry name" value="FUNGALYSIN"/>
</dbReference>
<dbReference type="SUPFAM" id="SSF55486">
    <property type="entry name" value="Metalloproteases ('zincins'), catalytic domain"/>
    <property type="match status" value="1"/>
</dbReference>
<dbReference type="PROSITE" id="PS00142">
    <property type="entry name" value="ZINC_PROTEASE"/>
    <property type="match status" value="1"/>
</dbReference>
<comment type="function">
    <text evidence="1">Secreted metalloproteinase that allows assimilation of proteinaceous substrates.</text>
</comment>
<comment type="cofactor">
    <cofactor evidence="1">
        <name>Zn(2+)</name>
        <dbReference type="ChEBI" id="CHEBI:29105"/>
    </cofactor>
    <text evidence="1">Binds 1 zinc ion per subunit.</text>
</comment>
<comment type="subcellular location">
    <subcellularLocation>
        <location evidence="1">Secreted</location>
    </subcellularLocation>
</comment>
<comment type="induction">
    <text>Expression is controlled by the prtT transcription factor.</text>
</comment>
<comment type="similarity">
    <text evidence="4">Belongs to the peptidase M36 family.</text>
</comment>
<evidence type="ECO:0000250" key="1"/>
<evidence type="ECO:0000255" key="2"/>
<evidence type="ECO:0000255" key="3">
    <source>
        <dbReference type="PROSITE-ProRule" id="PRU10095"/>
    </source>
</evidence>
<evidence type="ECO:0000305" key="4"/>
<reference key="1">
    <citation type="journal article" date="2007" name="Plant Cell">
        <title>Dothideomycete-plant interactions illuminated by genome sequencing and EST analysis of the wheat pathogen Stagonospora nodorum.</title>
        <authorList>
            <person name="Hane J.K."/>
            <person name="Lowe R.G.T."/>
            <person name="Solomon P.S."/>
            <person name="Tan K.-C."/>
            <person name="Schoch C.L."/>
            <person name="Spatafora J.W."/>
            <person name="Crous P.W."/>
            <person name="Kodira C.D."/>
            <person name="Birren B.W."/>
            <person name="Galagan J.E."/>
            <person name="Torriani S.F.F."/>
            <person name="McDonald B.A."/>
            <person name="Oliver R.P."/>
        </authorList>
    </citation>
    <scope>NUCLEOTIDE SEQUENCE [LARGE SCALE GENOMIC DNA]</scope>
    <source>
        <strain>SN15 / ATCC MYA-4574 / FGSC 10173</strain>
    </source>
</reference>
<feature type="signal peptide" evidence="2">
    <location>
        <begin position="1"/>
        <end position="20"/>
    </location>
</feature>
<feature type="propeptide" id="PRO_0000407162" evidence="1">
    <location>
        <begin position="21"/>
        <end position="244"/>
    </location>
</feature>
<feature type="chain" id="PRO_0000407163" description="Extracellular metalloproteinase 2">
    <location>
        <begin position="245"/>
        <end position="637"/>
    </location>
</feature>
<feature type="active site" evidence="3">
    <location>
        <position position="431"/>
    </location>
</feature>
<feature type="binding site" evidence="3">
    <location>
        <position position="430"/>
    </location>
    <ligand>
        <name>Zn(2+)</name>
        <dbReference type="ChEBI" id="CHEBI:29105"/>
        <note>catalytic</note>
    </ligand>
</feature>
<feature type="binding site" evidence="3">
    <location>
        <position position="434"/>
    </location>
    <ligand>
        <name>Zn(2+)</name>
        <dbReference type="ChEBI" id="CHEBI:29105"/>
        <note>catalytic</note>
    </ligand>
</feature>
<feature type="glycosylation site" description="N-linked (GlcNAc...) asparagine" evidence="2">
    <location>
        <position position="302"/>
    </location>
</feature>
<feature type="glycosylation site" description="N-linked (GlcNAc...) asparagine" evidence="2">
    <location>
        <position position="328"/>
    </location>
</feature>
<feature type="glycosylation site" description="N-linked (GlcNAc...) asparagine" evidence="2">
    <location>
        <position position="337"/>
    </location>
</feature>
<feature type="glycosylation site" description="N-linked (GlcNAc...) asparagine" evidence="2">
    <location>
        <position position="413"/>
    </location>
</feature>
<name>MEP2_PHANO</name>
<keyword id="KW-0325">Glycoprotein</keyword>
<keyword id="KW-0378">Hydrolase</keyword>
<keyword id="KW-0479">Metal-binding</keyword>
<keyword id="KW-0482">Metalloprotease</keyword>
<keyword id="KW-0645">Protease</keyword>
<keyword id="KW-0964">Secreted</keyword>
<keyword id="KW-0732">Signal</keyword>
<keyword id="KW-0862">Zinc</keyword>
<keyword id="KW-0865">Zymogen</keyword>
<protein>
    <recommendedName>
        <fullName>Extracellular metalloproteinase 2</fullName>
        <ecNumber>3.4.24.-</ecNumber>
    </recommendedName>
    <alternativeName>
        <fullName>Elastinolytic metalloproteinase MEP2</fullName>
    </alternativeName>
    <alternativeName>
        <fullName>Fungalysin MEP2</fullName>
    </alternativeName>
</protein>
<organism>
    <name type="scientific">Phaeosphaeria nodorum (strain SN15 / ATCC MYA-4574 / FGSC 10173)</name>
    <name type="common">Glume blotch fungus</name>
    <name type="synonym">Parastagonospora nodorum</name>
    <dbReference type="NCBI Taxonomy" id="321614"/>
    <lineage>
        <taxon>Eukaryota</taxon>
        <taxon>Fungi</taxon>
        <taxon>Dikarya</taxon>
        <taxon>Ascomycota</taxon>
        <taxon>Pezizomycotina</taxon>
        <taxon>Dothideomycetes</taxon>
        <taxon>Pleosporomycetidae</taxon>
        <taxon>Pleosporales</taxon>
        <taxon>Pleosporineae</taxon>
        <taxon>Phaeosphaeriaceae</taxon>
        <taxon>Parastagonospora</taxon>
    </lineage>
</organism>
<gene>
    <name type="primary">MEP2</name>
    <name type="ORF">SNOG_00493</name>
</gene>
<accession>Q0V671</accession>
<sequence length="637" mass="69501">MRSFLLASLASVATLKSAQAHPAHSTRGLSKRGIDLDSYRLKQPVSYTNANDVGSDASISSLTRRATAEETASELVKKVVPGATFRVADNYVGSNGVAHVYFKQTANGLDVDNGDFNVNVGRDGTVFSFGNSFYTGDIPTAPSKSKRDTIEPAAAFKSAVSVLDLPVSAGSATSEPKEAENTFAIKQSEGTVSEPEARLVYVQTNGKLALTWRVETDVLSNWLLTYVDAIDGSQVHAVVDYSADASYQVYPWGINDPTEGERTIVVDPFDKQASEFGWHSDGSKTYDTTRGNNGVAQNNWANKSASEYLNLPRPVSTDLKFHYPYSLNETDFQKYSNASVTQLFYTSNVYHDLLHKLGFNEQAGNFEINNNGAGGAGNDFVFLNAQDGSDFNNANFATPPDGQAARMRMYMWNGTTPFRDCSFDASVIIHEYTHGLSNRLTGGPANSNCLNVLESGGMGEGWSDFYAIATHLKAGDTRETDYPMAPWVSGKPNGIRNYLYSTDINVNPQTYIYVDPQTRVHPIGNIWAGMLYEVLWNLIDKHGKNDAGTPDFDSNGLPTDGKYLAMKIVMEGMALQPCNPNFVSARDAIVDADKILTGGDNKCEIWKGFAKRGLGKDAKYDRVARTESYDLPEGVCA</sequence>
<proteinExistence type="evidence at transcript level"/>